<evidence type="ECO:0000255" key="1">
    <source>
        <dbReference type="HAMAP-Rule" id="MF_00152"/>
    </source>
</evidence>
<gene>
    <name evidence="1" type="primary">nfo</name>
    <name type="ordered locus">EC55989_2412</name>
</gene>
<dbReference type="EC" id="3.1.21.2" evidence="1"/>
<dbReference type="EMBL" id="CU928145">
    <property type="protein sequence ID" value="CAU98282.1"/>
    <property type="molecule type" value="Genomic_DNA"/>
</dbReference>
<dbReference type="RefSeq" id="WP_000873890.1">
    <property type="nucleotide sequence ID" value="NC_011748.1"/>
</dbReference>
<dbReference type="SMR" id="B7LAI2"/>
<dbReference type="GeneID" id="93775023"/>
<dbReference type="KEGG" id="eck:EC55989_2412"/>
<dbReference type="HOGENOM" id="CLU_025885_0_4_6"/>
<dbReference type="Proteomes" id="UP000000746">
    <property type="component" value="Chromosome"/>
</dbReference>
<dbReference type="GO" id="GO:0008833">
    <property type="term" value="F:deoxyribonuclease IV (phage-T4-induced) activity"/>
    <property type="evidence" value="ECO:0007669"/>
    <property type="project" value="UniProtKB-UniRule"/>
</dbReference>
<dbReference type="GO" id="GO:0003677">
    <property type="term" value="F:DNA binding"/>
    <property type="evidence" value="ECO:0007669"/>
    <property type="project" value="InterPro"/>
</dbReference>
<dbReference type="GO" id="GO:0003906">
    <property type="term" value="F:DNA-(apurinic or apyrimidinic site) endonuclease activity"/>
    <property type="evidence" value="ECO:0007669"/>
    <property type="project" value="TreeGrafter"/>
</dbReference>
<dbReference type="GO" id="GO:0008081">
    <property type="term" value="F:phosphoric diester hydrolase activity"/>
    <property type="evidence" value="ECO:0007669"/>
    <property type="project" value="TreeGrafter"/>
</dbReference>
<dbReference type="GO" id="GO:0008270">
    <property type="term" value="F:zinc ion binding"/>
    <property type="evidence" value="ECO:0007669"/>
    <property type="project" value="UniProtKB-UniRule"/>
</dbReference>
<dbReference type="GO" id="GO:0006284">
    <property type="term" value="P:base-excision repair"/>
    <property type="evidence" value="ECO:0007669"/>
    <property type="project" value="TreeGrafter"/>
</dbReference>
<dbReference type="CDD" id="cd00019">
    <property type="entry name" value="AP2Ec"/>
    <property type="match status" value="1"/>
</dbReference>
<dbReference type="FunFam" id="3.20.20.150:FF:000001">
    <property type="entry name" value="Probable endonuclease 4"/>
    <property type="match status" value="1"/>
</dbReference>
<dbReference type="Gene3D" id="3.20.20.150">
    <property type="entry name" value="Divalent-metal-dependent TIM barrel enzymes"/>
    <property type="match status" value="1"/>
</dbReference>
<dbReference type="HAMAP" id="MF_00152">
    <property type="entry name" value="Nfo"/>
    <property type="match status" value="1"/>
</dbReference>
<dbReference type="InterPro" id="IPR001719">
    <property type="entry name" value="AP_endonuc_2"/>
</dbReference>
<dbReference type="InterPro" id="IPR018246">
    <property type="entry name" value="AP_endonuc_F2_Zn_BS"/>
</dbReference>
<dbReference type="InterPro" id="IPR036237">
    <property type="entry name" value="Xyl_isomerase-like_sf"/>
</dbReference>
<dbReference type="InterPro" id="IPR013022">
    <property type="entry name" value="Xyl_isomerase-like_TIM-brl"/>
</dbReference>
<dbReference type="NCBIfam" id="TIGR00587">
    <property type="entry name" value="nfo"/>
    <property type="match status" value="1"/>
</dbReference>
<dbReference type="NCBIfam" id="NF002199">
    <property type="entry name" value="PRK01060.1-4"/>
    <property type="match status" value="1"/>
</dbReference>
<dbReference type="PANTHER" id="PTHR21445:SF0">
    <property type="entry name" value="APURINIC-APYRIMIDINIC ENDONUCLEASE"/>
    <property type="match status" value="1"/>
</dbReference>
<dbReference type="PANTHER" id="PTHR21445">
    <property type="entry name" value="ENDONUCLEASE IV ENDODEOXYRIBONUCLEASE IV"/>
    <property type="match status" value="1"/>
</dbReference>
<dbReference type="Pfam" id="PF01261">
    <property type="entry name" value="AP_endonuc_2"/>
    <property type="match status" value="1"/>
</dbReference>
<dbReference type="SMART" id="SM00518">
    <property type="entry name" value="AP2Ec"/>
    <property type="match status" value="1"/>
</dbReference>
<dbReference type="SUPFAM" id="SSF51658">
    <property type="entry name" value="Xylose isomerase-like"/>
    <property type="match status" value="1"/>
</dbReference>
<dbReference type="PROSITE" id="PS00729">
    <property type="entry name" value="AP_NUCLEASE_F2_1"/>
    <property type="match status" value="1"/>
</dbReference>
<dbReference type="PROSITE" id="PS00730">
    <property type="entry name" value="AP_NUCLEASE_F2_2"/>
    <property type="match status" value="1"/>
</dbReference>
<dbReference type="PROSITE" id="PS00731">
    <property type="entry name" value="AP_NUCLEASE_F2_3"/>
    <property type="match status" value="1"/>
</dbReference>
<dbReference type="PROSITE" id="PS51432">
    <property type="entry name" value="AP_NUCLEASE_F2_4"/>
    <property type="match status" value="1"/>
</dbReference>
<proteinExistence type="inferred from homology"/>
<feature type="chain" id="PRO_1000123326" description="Probable endonuclease 4">
    <location>
        <begin position="1"/>
        <end position="285"/>
    </location>
</feature>
<feature type="binding site" evidence="1">
    <location>
        <position position="69"/>
    </location>
    <ligand>
        <name>Zn(2+)</name>
        <dbReference type="ChEBI" id="CHEBI:29105"/>
        <label>1</label>
    </ligand>
</feature>
<feature type="binding site" evidence="1">
    <location>
        <position position="109"/>
    </location>
    <ligand>
        <name>Zn(2+)</name>
        <dbReference type="ChEBI" id="CHEBI:29105"/>
        <label>1</label>
    </ligand>
</feature>
<feature type="binding site" evidence="1">
    <location>
        <position position="145"/>
    </location>
    <ligand>
        <name>Zn(2+)</name>
        <dbReference type="ChEBI" id="CHEBI:29105"/>
        <label>1</label>
    </ligand>
</feature>
<feature type="binding site" evidence="1">
    <location>
        <position position="145"/>
    </location>
    <ligand>
        <name>Zn(2+)</name>
        <dbReference type="ChEBI" id="CHEBI:29105"/>
        <label>2</label>
    </ligand>
</feature>
<feature type="binding site" evidence="1">
    <location>
        <position position="179"/>
    </location>
    <ligand>
        <name>Zn(2+)</name>
        <dbReference type="ChEBI" id="CHEBI:29105"/>
        <label>2</label>
    </ligand>
</feature>
<feature type="binding site" evidence="1">
    <location>
        <position position="182"/>
    </location>
    <ligand>
        <name>Zn(2+)</name>
        <dbReference type="ChEBI" id="CHEBI:29105"/>
        <label>3</label>
    </ligand>
</feature>
<feature type="binding site" evidence="1">
    <location>
        <position position="216"/>
    </location>
    <ligand>
        <name>Zn(2+)</name>
        <dbReference type="ChEBI" id="CHEBI:29105"/>
        <label>2</label>
    </ligand>
</feature>
<feature type="binding site" evidence="1">
    <location>
        <position position="229"/>
    </location>
    <ligand>
        <name>Zn(2+)</name>
        <dbReference type="ChEBI" id="CHEBI:29105"/>
        <label>3</label>
    </ligand>
</feature>
<feature type="binding site" evidence="1">
    <location>
        <position position="231"/>
    </location>
    <ligand>
        <name>Zn(2+)</name>
        <dbReference type="ChEBI" id="CHEBI:29105"/>
        <label>3</label>
    </ligand>
</feature>
<feature type="binding site" evidence="1">
    <location>
        <position position="261"/>
    </location>
    <ligand>
        <name>Zn(2+)</name>
        <dbReference type="ChEBI" id="CHEBI:29105"/>
        <label>2</label>
    </ligand>
</feature>
<reference key="1">
    <citation type="journal article" date="2009" name="PLoS Genet.">
        <title>Organised genome dynamics in the Escherichia coli species results in highly diverse adaptive paths.</title>
        <authorList>
            <person name="Touchon M."/>
            <person name="Hoede C."/>
            <person name="Tenaillon O."/>
            <person name="Barbe V."/>
            <person name="Baeriswyl S."/>
            <person name="Bidet P."/>
            <person name="Bingen E."/>
            <person name="Bonacorsi S."/>
            <person name="Bouchier C."/>
            <person name="Bouvet O."/>
            <person name="Calteau A."/>
            <person name="Chiapello H."/>
            <person name="Clermont O."/>
            <person name="Cruveiller S."/>
            <person name="Danchin A."/>
            <person name="Diard M."/>
            <person name="Dossat C."/>
            <person name="Karoui M.E."/>
            <person name="Frapy E."/>
            <person name="Garry L."/>
            <person name="Ghigo J.M."/>
            <person name="Gilles A.M."/>
            <person name="Johnson J."/>
            <person name="Le Bouguenec C."/>
            <person name="Lescat M."/>
            <person name="Mangenot S."/>
            <person name="Martinez-Jehanne V."/>
            <person name="Matic I."/>
            <person name="Nassif X."/>
            <person name="Oztas S."/>
            <person name="Petit M.A."/>
            <person name="Pichon C."/>
            <person name="Rouy Z."/>
            <person name="Ruf C.S."/>
            <person name="Schneider D."/>
            <person name="Tourret J."/>
            <person name="Vacherie B."/>
            <person name="Vallenet D."/>
            <person name="Medigue C."/>
            <person name="Rocha E.P.C."/>
            <person name="Denamur E."/>
        </authorList>
    </citation>
    <scope>NUCLEOTIDE SEQUENCE [LARGE SCALE GENOMIC DNA]</scope>
    <source>
        <strain>55989 / EAEC</strain>
    </source>
</reference>
<name>END4_ECO55</name>
<keyword id="KW-0227">DNA damage</keyword>
<keyword id="KW-0234">DNA repair</keyword>
<keyword id="KW-0255">Endonuclease</keyword>
<keyword id="KW-0378">Hydrolase</keyword>
<keyword id="KW-0479">Metal-binding</keyword>
<keyword id="KW-0540">Nuclease</keyword>
<keyword id="KW-1185">Reference proteome</keyword>
<keyword id="KW-0862">Zinc</keyword>
<organism>
    <name type="scientific">Escherichia coli (strain 55989 / EAEC)</name>
    <dbReference type="NCBI Taxonomy" id="585055"/>
    <lineage>
        <taxon>Bacteria</taxon>
        <taxon>Pseudomonadati</taxon>
        <taxon>Pseudomonadota</taxon>
        <taxon>Gammaproteobacteria</taxon>
        <taxon>Enterobacterales</taxon>
        <taxon>Enterobacteriaceae</taxon>
        <taxon>Escherichia</taxon>
    </lineage>
</organism>
<sequence length="285" mass="31492">MKYIGAHVSAAGGLANAAIRAAEIDATAFALFTKNQRQWRAAPLTTQTIDEFKAACEKYHYTSAQILPHDSYLINLGHPVTEALEKSRDAFIDEMQRCEQLGLSLLNFHPGSHLMQISEEDCLARIAESINIALDKTQGVTAVIENTAGQGSNLGFKFEHLAAIIDGVEDKSRVGVCIDTCHAFAAGYDLRTPAECEKTFADFARIVGFKYLRGMHLNDAKSTFGSRVDRHHSLGEGNIGHDAFRWIMQDDRFDGIPLILETINPDIWAEEIAWLKAQQTEKAVA</sequence>
<comment type="function">
    <text evidence="1">Endonuclease IV plays a role in DNA repair. It cleaves phosphodiester bonds at apurinic or apyrimidinic (AP) sites, generating a 3'-hydroxyl group and a 5'-terminal sugar phosphate.</text>
</comment>
<comment type="catalytic activity">
    <reaction evidence="1">
        <text>Endonucleolytic cleavage to 5'-phosphooligonucleotide end-products.</text>
        <dbReference type="EC" id="3.1.21.2"/>
    </reaction>
</comment>
<comment type="cofactor">
    <cofactor evidence="1">
        <name>Zn(2+)</name>
        <dbReference type="ChEBI" id="CHEBI:29105"/>
    </cofactor>
    <text evidence="1">Binds 3 Zn(2+) ions.</text>
</comment>
<comment type="similarity">
    <text evidence="1">Belongs to the AP endonuclease 2 family.</text>
</comment>
<protein>
    <recommendedName>
        <fullName evidence="1">Probable endonuclease 4</fullName>
        <ecNumber evidence="1">3.1.21.2</ecNumber>
    </recommendedName>
    <alternativeName>
        <fullName evidence="1">Endodeoxyribonuclease IV</fullName>
    </alternativeName>
    <alternativeName>
        <fullName evidence="1">Endonuclease IV</fullName>
    </alternativeName>
</protein>
<accession>B7LAI2</accession>